<organism>
    <name type="scientific">Bacillus cereus (strain Q1)</name>
    <dbReference type="NCBI Taxonomy" id="361100"/>
    <lineage>
        <taxon>Bacteria</taxon>
        <taxon>Bacillati</taxon>
        <taxon>Bacillota</taxon>
        <taxon>Bacilli</taxon>
        <taxon>Bacillales</taxon>
        <taxon>Bacillaceae</taxon>
        <taxon>Bacillus</taxon>
        <taxon>Bacillus cereus group</taxon>
    </lineage>
</organism>
<comment type="function">
    <text evidence="1">One of the primary rRNA binding proteins, it binds directly to 16S rRNA where it nucleates assembly of the head domain of the 30S subunit. Is located at the subunit interface close to the decoding center, probably blocks exit of the E-site tRNA.</text>
</comment>
<comment type="subunit">
    <text evidence="1">Part of the 30S ribosomal subunit. Contacts proteins S9 and S11.</text>
</comment>
<comment type="similarity">
    <text evidence="1">Belongs to the universal ribosomal protein uS7 family.</text>
</comment>
<reference key="1">
    <citation type="journal article" date="2009" name="J. Bacteriol.">
        <title>Complete genome sequence of the extremophilic Bacillus cereus strain Q1 with industrial applications.</title>
        <authorList>
            <person name="Xiong Z."/>
            <person name="Jiang Y."/>
            <person name="Qi D."/>
            <person name="Lu H."/>
            <person name="Yang F."/>
            <person name="Yang J."/>
            <person name="Chen L."/>
            <person name="Sun L."/>
            <person name="Xu X."/>
            <person name="Xue Y."/>
            <person name="Zhu Y."/>
            <person name="Jin Q."/>
        </authorList>
    </citation>
    <scope>NUCLEOTIDE SEQUENCE [LARGE SCALE GENOMIC DNA]</scope>
    <source>
        <strain>Q1</strain>
    </source>
</reference>
<evidence type="ECO:0000255" key="1">
    <source>
        <dbReference type="HAMAP-Rule" id="MF_00480"/>
    </source>
</evidence>
<evidence type="ECO:0000305" key="2"/>
<name>RS7_BACCQ</name>
<proteinExistence type="inferred from homology"/>
<gene>
    <name evidence="1" type="primary">rpsG</name>
    <name type="ordered locus">BCQ_0119</name>
</gene>
<protein>
    <recommendedName>
        <fullName evidence="1">Small ribosomal subunit protein uS7</fullName>
    </recommendedName>
    <alternativeName>
        <fullName evidence="2">30S ribosomal protein S7</fullName>
    </alternativeName>
</protein>
<dbReference type="EMBL" id="CP000227">
    <property type="protein sequence ID" value="ACM10634.1"/>
    <property type="molecule type" value="Genomic_DNA"/>
</dbReference>
<dbReference type="SMR" id="B9IZJ0"/>
<dbReference type="KEGG" id="bcq:BCQ_0119"/>
<dbReference type="HOGENOM" id="CLU_072226_1_1_9"/>
<dbReference type="Proteomes" id="UP000000441">
    <property type="component" value="Chromosome"/>
</dbReference>
<dbReference type="GO" id="GO:0015935">
    <property type="term" value="C:small ribosomal subunit"/>
    <property type="evidence" value="ECO:0007669"/>
    <property type="project" value="InterPro"/>
</dbReference>
<dbReference type="GO" id="GO:0019843">
    <property type="term" value="F:rRNA binding"/>
    <property type="evidence" value="ECO:0007669"/>
    <property type="project" value="UniProtKB-UniRule"/>
</dbReference>
<dbReference type="GO" id="GO:0003735">
    <property type="term" value="F:structural constituent of ribosome"/>
    <property type="evidence" value="ECO:0007669"/>
    <property type="project" value="InterPro"/>
</dbReference>
<dbReference type="GO" id="GO:0000049">
    <property type="term" value="F:tRNA binding"/>
    <property type="evidence" value="ECO:0007669"/>
    <property type="project" value="UniProtKB-UniRule"/>
</dbReference>
<dbReference type="GO" id="GO:0006412">
    <property type="term" value="P:translation"/>
    <property type="evidence" value="ECO:0007669"/>
    <property type="project" value="UniProtKB-UniRule"/>
</dbReference>
<dbReference type="CDD" id="cd14869">
    <property type="entry name" value="uS7_Bacteria"/>
    <property type="match status" value="1"/>
</dbReference>
<dbReference type="FunFam" id="1.10.455.10:FF:000001">
    <property type="entry name" value="30S ribosomal protein S7"/>
    <property type="match status" value="1"/>
</dbReference>
<dbReference type="Gene3D" id="1.10.455.10">
    <property type="entry name" value="Ribosomal protein S7 domain"/>
    <property type="match status" value="1"/>
</dbReference>
<dbReference type="HAMAP" id="MF_00480_B">
    <property type="entry name" value="Ribosomal_uS7_B"/>
    <property type="match status" value="1"/>
</dbReference>
<dbReference type="InterPro" id="IPR000235">
    <property type="entry name" value="Ribosomal_uS7"/>
</dbReference>
<dbReference type="InterPro" id="IPR005717">
    <property type="entry name" value="Ribosomal_uS7_bac/org-type"/>
</dbReference>
<dbReference type="InterPro" id="IPR020606">
    <property type="entry name" value="Ribosomal_uS7_CS"/>
</dbReference>
<dbReference type="InterPro" id="IPR023798">
    <property type="entry name" value="Ribosomal_uS7_dom"/>
</dbReference>
<dbReference type="InterPro" id="IPR036823">
    <property type="entry name" value="Ribosomal_uS7_dom_sf"/>
</dbReference>
<dbReference type="NCBIfam" id="TIGR01029">
    <property type="entry name" value="rpsG_bact"/>
    <property type="match status" value="1"/>
</dbReference>
<dbReference type="PANTHER" id="PTHR11205">
    <property type="entry name" value="RIBOSOMAL PROTEIN S7"/>
    <property type="match status" value="1"/>
</dbReference>
<dbReference type="Pfam" id="PF00177">
    <property type="entry name" value="Ribosomal_S7"/>
    <property type="match status" value="1"/>
</dbReference>
<dbReference type="PIRSF" id="PIRSF002122">
    <property type="entry name" value="RPS7p_RPS7a_RPS5e_RPS7o"/>
    <property type="match status" value="1"/>
</dbReference>
<dbReference type="SUPFAM" id="SSF47973">
    <property type="entry name" value="Ribosomal protein S7"/>
    <property type="match status" value="1"/>
</dbReference>
<dbReference type="PROSITE" id="PS00052">
    <property type="entry name" value="RIBOSOMAL_S7"/>
    <property type="match status" value="1"/>
</dbReference>
<sequence>MPRKGPVAKRDVLPDPMYNSKLVTRLINKMMVDGKKGKSQTILYNAFDIVSERTGKEPMEVFEQALKNIMPVLEVRARRVGGANYQVPVEVRPERRTTLGLRWLVNYARLRGEKTMEERLANEILDAANNAGASVKKREDTHKMAEANKAFAHYRW</sequence>
<accession>B9IZJ0</accession>
<feature type="chain" id="PRO_1000135580" description="Small ribosomal subunit protein uS7">
    <location>
        <begin position="1"/>
        <end position="156"/>
    </location>
</feature>
<keyword id="KW-0687">Ribonucleoprotein</keyword>
<keyword id="KW-0689">Ribosomal protein</keyword>
<keyword id="KW-0694">RNA-binding</keyword>
<keyword id="KW-0699">rRNA-binding</keyword>
<keyword id="KW-0820">tRNA-binding</keyword>